<comment type="function">
    <text>Affects sucrose utilization and alpha-glucosidase activity. Probable transcriptional activator.</text>
</comment>
<comment type="subcellular location">
    <subcellularLocation>
        <location evidence="2">Nucleus</location>
    </subcellularLocation>
</comment>
<comment type="similarity">
    <text evidence="2">Belongs to the MAL13 family.</text>
</comment>
<gene>
    <name type="primary">SUC1</name>
    <name type="ordered locus">CAALFM_CR09210WA</name>
    <name type="ORF">CaO19.7319</name>
</gene>
<reference key="1">
    <citation type="journal article" date="1992" name="J. Bacteriol.">
        <title>A zinc finger protein from Candida albicans is involved in sucrose utilization.</title>
        <authorList>
            <person name="Kelly R."/>
            <person name="Kwon-Chung K.J."/>
        </authorList>
    </citation>
    <scope>NUCLEOTIDE SEQUENCE [GENOMIC DNA]</scope>
</reference>
<reference key="2">
    <citation type="journal article" date="2004" name="Proc. Natl. Acad. Sci. U.S.A.">
        <title>The diploid genome sequence of Candida albicans.</title>
        <authorList>
            <person name="Jones T."/>
            <person name="Federspiel N.A."/>
            <person name="Chibana H."/>
            <person name="Dungan J."/>
            <person name="Kalman S."/>
            <person name="Magee B.B."/>
            <person name="Newport G."/>
            <person name="Thorstenson Y.R."/>
            <person name="Agabian N."/>
            <person name="Magee P.T."/>
            <person name="Davis R.W."/>
            <person name="Scherer S."/>
        </authorList>
    </citation>
    <scope>NUCLEOTIDE SEQUENCE [LARGE SCALE GENOMIC DNA]</scope>
    <source>
        <strain>SC5314 / ATCC MYA-2876</strain>
    </source>
</reference>
<reference key="3">
    <citation type="journal article" date="2007" name="Genome Biol.">
        <title>Assembly of the Candida albicans genome into sixteen supercontigs aligned on the eight chromosomes.</title>
        <authorList>
            <person name="van het Hoog M."/>
            <person name="Rast T.J."/>
            <person name="Martchenko M."/>
            <person name="Grindle S."/>
            <person name="Dignard D."/>
            <person name="Hogues H."/>
            <person name="Cuomo C."/>
            <person name="Berriman M."/>
            <person name="Scherer S."/>
            <person name="Magee B.B."/>
            <person name="Whiteway M."/>
            <person name="Chibana H."/>
            <person name="Nantel A."/>
            <person name="Magee P.T."/>
        </authorList>
    </citation>
    <scope>GENOME REANNOTATION</scope>
    <source>
        <strain>SC5314 / ATCC MYA-2876</strain>
    </source>
</reference>
<reference key="4">
    <citation type="journal article" date="2013" name="Genome Biol.">
        <title>Assembly of a phased diploid Candida albicans genome facilitates allele-specific measurements and provides a simple model for repeat and indel structure.</title>
        <authorList>
            <person name="Muzzey D."/>
            <person name="Schwartz K."/>
            <person name="Weissman J.S."/>
            <person name="Sherlock G."/>
        </authorList>
    </citation>
    <scope>NUCLEOTIDE SEQUENCE [LARGE SCALE GENOMIC DNA]</scope>
    <scope>GENOME REANNOTATION</scope>
    <source>
        <strain>SC5314 / ATCC MYA-2876</strain>
    </source>
</reference>
<dbReference type="EMBL" id="S75352">
    <property type="protein sequence ID" value="AAB20826.2"/>
    <property type="molecule type" value="Genomic_DNA"/>
</dbReference>
<dbReference type="EMBL" id="CP017630">
    <property type="protein sequence ID" value="AOW31586.1"/>
    <property type="molecule type" value="Genomic_DNA"/>
</dbReference>
<dbReference type="PIR" id="A43302">
    <property type="entry name" value="A43302"/>
</dbReference>
<dbReference type="RefSeq" id="XP_716453.1">
    <property type="nucleotide sequence ID" value="XM_711360.1"/>
</dbReference>
<dbReference type="SMR" id="P33181"/>
<dbReference type="FunCoup" id="P33181">
    <property type="interactions" value="661"/>
</dbReference>
<dbReference type="STRING" id="237561.P33181"/>
<dbReference type="EnsemblFungi" id="CR_09210W_A-T">
    <property type="protein sequence ID" value="CR_09210W_A-T-p1"/>
    <property type="gene ID" value="CR_09210W_A"/>
</dbReference>
<dbReference type="GeneID" id="3641916"/>
<dbReference type="KEGG" id="cal:CAALFM_CR09210WA"/>
<dbReference type="CGD" id="CAL0000197139">
    <property type="gene designation" value="SUC1"/>
</dbReference>
<dbReference type="VEuPathDB" id="FungiDB:CR_09210W_A"/>
<dbReference type="eggNOG" id="ENOG502S2FW">
    <property type="taxonomic scope" value="Eukaryota"/>
</dbReference>
<dbReference type="HOGENOM" id="CLU_016574_7_1_1"/>
<dbReference type="InParanoid" id="P33181"/>
<dbReference type="OMA" id="KLFEVAM"/>
<dbReference type="OrthoDB" id="2740448at2759"/>
<dbReference type="Proteomes" id="UP000000559">
    <property type="component" value="Chromosome R"/>
</dbReference>
<dbReference type="GO" id="GO:0005634">
    <property type="term" value="C:nucleus"/>
    <property type="evidence" value="ECO:0007669"/>
    <property type="project" value="UniProtKB-SubCell"/>
</dbReference>
<dbReference type="GO" id="GO:0003677">
    <property type="term" value="F:DNA binding"/>
    <property type="evidence" value="ECO:0007669"/>
    <property type="project" value="UniProtKB-KW"/>
</dbReference>
<dbReference type="GO" id="GO:0000981">
    <property type="term" value="F:DNA-binding transcription factor activity, RNA polymerase II-specific"/>
    <property type="evidence" value="ECO:0007669"/>
    <property type="project" value="InterPro"/>
</dbReference>
<dbReference type="GO" id="GO:0008270">
    <property type="term" value="F:zinc ion binding"/>
    <property type="evidence" value="ECO:0007669"/>
    <property type="project" value="InterPro"/>
</dbReference>
<dbReference type="GO" id="GO:0006351">
    <property type="term" value="P:DNA-templated transcription"/>
    <property type="evidence" value="ECO:0007669"/>
    <property type="project" value="InterPro"/>
</dbReference>
<dbReference type="GO" id="GO:0000025">
    <property type="term" value="P:maltose catabolic process"/>
    <property type="evidence" value="ECO:0000315"/>
    <property type="project" value="CGD"/>
</dbReference>
<dbReference type="GO" id="GO:1900189">
    <property type="term" value="P:positive regulation of cell adhesion involved in single-species biofilm formation"/>
    <property type="evidence" value="ECO:0000315"/>
    <property type="project" value="CGD"/>
</dbReference>
<dbReference type="GO" id="GO:0010811">
    <property type="term" value="P:positive regulation of cell-substrate adhesion"/>
    <property type="evidence" value="ECO:0000315"/>
    <property type="project" value="CGD"/>
</dbReference>
<dbReference type="GO" id="GO:0006357">
    <property type="term" value="P:regulation of transcription by RNA polymerase II"/>
    <property type="evidence" value="ECO:0000315"/>
    <property type="project" value="CGD"/>
</dbReference>
<dbReference type="GO" id="GO:0044011">
    <property type="term" value="P:single-species biofilm formation on inanimate substrate"/>
    <property type="evidence" value="ECO:0000315"/>
    <property type="project" value="CGD"/>
</dbReference>
<dbReference type="CDD" id="cd12148">
    <property type="entry name" value="fungal_TF_MHR"/>
    <property type="match status" value="1"/>
</dbReference>
<dbReference type="CDD" id="cd00067">
    <property type="entry name" value="GAL4"/>
    <property type="match status" value="1"/>
</dbReference>
<dbReference type="FunFam" id="4.10.240.10:FF:000119">
    <property type="entry name" value="Probable sucrose utilization protein SUC1"/>
    <property type="match status" value="1"/>
</dbReference>
<dbReference type="Gene3D" id="4.10.240.10">
    <property type="entry name" value="Zn(2)-C6 fungal-type DNA-binding domain"/>
    <property type="match status" value="1"/>
</dbReference>
<dbReference type="InterPro" id="IPR050797">
    <property type="entry name" value="Carb_Metab_Trans_Reg"/>
</dbReference>
<dbReference type="InterPro" id="IPR007219">
    <property type="entry name" value="Transcription_factor_dom_fun"/>
</dbReference>
<dbReference type="InterPro" id="IPR036864">
    <property type="entry name" value="Zn2-C6_fun-type_DNA-bd_sf"/>
</dbReference>
<dbReference type="InterPro" id="IPR001138">
    <property type="entry name" value="Zn2Cys6_DnaBD"/>
</dbReference>
<dbReference type="PANTHER" id="PTHR31668">
    <property type="entry name" value="GLUCOSE TRANSPORT TRANSCRIPTION REGULATOR RGT1-RELATED-RELATED"/>
    <property type="match status" value="1"/>
</dbReference>
<dbReference type="PANTHER" id="PTHR31668:SF18">
    <property type="entry name" value="MALTOSE FERMENTATION REGULATORY PROTEIN MAL13-RELATED"/>
    <property type="match status" value="1"/>
</dbReference>
<dbReference type="Pfam" id="PF04082">
    <property type="entry name" value="Fungal_trans"/>
    <property type="match status" value="1"/>
</dbReference>
<dbReference type="Pfam" id="PF00172">
    <property type="entry name" value="Zn_clus"/>
    <property type="match status" value="1"/>
</dbReference>
<dbReference type="SMART" id="SM00066">
    <property type="entry name" value="GAL4"/>
    <property type="match status" value="1"/>
</dbReference>
<dbReference type="SUPFAM" id="SSF57701">
    <property type="entry name" value="Zn2/Cys6 DNA-binding domain"/>
    <property type="match status" value="1"/>
</dbReference>
<dbReference type="PROSITE" id="PS00463">
    <property type="entry name" value="ZN2_CY6_FUNGAL_1"/>
    <property type="match status" value="1"/>
</dbReference>
<dbReference type="PROSITE" id="PS50048">
    <property type="entry name" value="ZN2_CY6_FUNGAL_2"/>
    <property type="match status" value="1"/>
</dbReference>
<protein>
    <recommendedName>
        <fullName>Probable sucrose utilization protein SUC1</fullName>
    </recommendedName>
</protein>
<sequence length="501" mass="57110">MSKGKRAPYTRPCDSCSFRKVKCDMKTPCSRCVLNNLKCTNNRIRKKCGPKKIRDRTREAINNLSNKEDPKTNSFIPHFQLDKLQPCLETYQTWYYGIWPVLSISDLNMKITKRDVSAYALACALSAAILNQIDFISNNGTYCIPEDVKKLDFIGECIRARTFMNYQMTPTLETILTSFFLHVAEVNKGSKPAAIIYLREAITMAQIIGLHNESTYKSKPVAEAHRMRKIYFMLMVTERFMCIDDLIPVVLENSIKEFSLDDEQYSVLIDGFKELVKVFSIPSKAIFDRFIQMNDSISMPPETAGLLNKIQLELESICISPVAPDIQKANIIVSKYWMKALTWKITRKNNLLDDFVTTLCVKYPIELSEQFLGEIKSIPLRAFESNGPGVVFKLLSIATVLIDSINLSNDVSGYESLQRMFDLISKLKKTDMIIPRREYDRIKEALTKMEIDIFFSSAQSGGYISEVESNGSLDAFLTDPLVFYSGSNDNPTPSYIPDYQK</sequence>
<evidence type="ECO:0000255" key="1">
    <source>
        <dbReference type="PROSITE-ProRule" id="PRU00227"/>
    </source>
</evidence>
<evidence type="ECO:0000305" key="2"/>
<accession>P33181</accession>
<accession>A0A1D8PTX7</accession>
<accession>Q5A3Z0</accession>
<feature type="chain" id="PRO_0000114981" description="Probable sucrose utilization protein SUC1">
    <location>
        <begin position="1"/>
        <end position="501"/>
    </location>
</feature>
<feature type="DNA-binding region" description="Zn(2)-C6 fungal-type" evidence="1">
    <location>
        <begin position="13"/>
        <end position="39"/>
    </location>
</feature>
<keyword id="KW-0010">Activator</keyword>
<keyword id="KW-0238">DNA-binding</keyword>
<keyword id="KW-0479">Metal-binding</keyword>
<keyword id="KW-0539">Nucleus</keyword>
<keyword id="KW-1185">Reference proteome</keyword>
<keyword id="KW-0804">Transcription</keyword>
<keyword id="KW-0805">Transcription regulation</keyword>
<keyword id="KW-0862">Zinc</keyword>
<name>SUC1_CANAL</name>
<proteinExistence type="inferred from homology"/>
<organism>
    <name type="scientific">Candida albicans (strain SC5314 / ATCC MYA-2876)</name>
    <name type="common">Yeast</name>
    <dbReference type="NCBI Taxonomy" id="237561"/>
    <lineage>
        <taxon>Eukaryota</taxon>
        <taxon>Fungi</taxon>
        <taxon>Dikarya</taxon>
        <taxon>Ascomycota</taxon>
        <taxon>Saccharomycotina</taxon>
        <taxon>Pichiomycetes</taxon>
        <taxon>Debaryomycetaceae</taxon>
        <taxon>Candida/Lodderomyces clade</taxon>
        <taxon>Candida</taxon>
    </lineage>
</organism>